<protein>
    <recommendedName>
        <fullName evidence="1">Crossover junction endodeoxyribonuclease RuvC</fullName>
        <ecNumber evidence="1">3.1.21.10</ecNumber>
    </recommendedName>
    <alternativeName>
        <fullName evidence="1">Holliday junction nuclease RuvC</fullName>
    </alternativeName>
    <alternativeName>
        <fullName evidence="1">Holliday junction resolvase RuvC</fullName>
    </alternativeName>
</protein>
<organism>
    <name type="scientific">Pasteurella multocida (strain Pm70)</name>
    <dbReference type="NCBI Taxonomy" id="272843"/>
    <lineage>
        <taxon>Bacteria</taxon>
        <taxon>Pseudomonadati</taxon>
        <taxon>Pseudomonadota</taxon>
        <taxon>Gammaproteobacteria</taxon>
        <taxon>Pasteurellales</taxon>
        <taxon>Pasteurellaceae</taxon>
        <taxon>Pasteurella</taxon>
    </lineage>
</organism>
<keyword id="KW-0963">Cytoplasm</keyword>
<keyword id="KW-0227">DNA damage</keyword>
<keyword id="KW-0233">DNA recombination</keyword>
<keyword id="KW-0234">DNA repair</keyword>
<keyword id="KW-0238">DNA-binding</keyword>
<keyword id="KW-0255">Endonuclease</keyword>
<keyword id="KW-0378">Hydrolase</keyword>
<keyword id="KW-0460">Magnesium</keyword>
<keyword id="KW-0479">Metal-binding</keyword>
<keyword id="KW-0540">Nuclease</keyword>
<keyword id="KW-1185">Reference proteome</keyword>
<evidence type="ECO:0000255" key="1">
    <source>
        <dbReference type="HAMAP-Rule" id="MF_00034"/>
    </source>
</evidence>
<evidence type="ECO:0000305" key="2"/>
<accession>P57894</accession>
<feature type="chain" id="PRO_0000183115" description="Crossover junction endodeoxyribonuclease RuvC">
    <location>
        <begin position="1"/>
        <end position="190"/>
    </location>
</feature>
<feature type="active site" evidence="1">
    <location>
        <position position="8"/>
    </location>
</feature>
<feature type="active site" evidence="1">
    <location>
        <position position="67"/>
    </location>
</feature>
<feature type="active site" evidence="1">
    <location>
        <position position="139"/>
    </location>
</feature>
<feature type="binding site" evidence="1">
    <location>
        <position position="8"/>
    </location>
    <ligand>
        <name>Mg(2+)</name>
        <dbReference type="ChEBI" id="CHEBI:18420"/>
        <label>1</label>
    </ligand>
</feature>
<feature type="binding site" evidence="1">
    <location>
        <position position="67"/>
    </location>
    <ligand>
        <name>Mg(2+)</name>
        <dbReference type="ChEBI" id="CHEBI:18420"/>
        <label>2</label>
    </ligand>
</feature>
<feature type="binding site" evidence="1">
    <location>
        <position position="139"/>
    </location>
    <ligand>
        <name>Mg(2+)</name>
        <dbReference type="ChEBI" id="CHEBI:18420"/>
        <label>1</label>
    </ligand>
</feature>
<name>RUVC_PASMU</name>
<sequence>MAIILGIDPGSRVTGYGVIRQAGRHLEYLGSGVIRTSVTDLPTRLKRIYMGVNEIILQYQPDMFAIEEVFLAKNANSALKLGQARGAAIVAAVNHDLPVFEYAARLVKQTVVGIGSADKIQVQDMVTRILTLSEKPQADAADALAIAITHAHSLQHAFHVTNSAQATEKPEKTTALLKARYSRGRFRLKI</sequence>
<dbReference type="EC" id="3.1.21.10" evidence="1"/>
<dbReference type="EMBL" id="AE004439">
    <property type="protein sequence ID" value="AAK03062.1"/>
    <property type="molecule type" value="Genomic_DNA"/>
</dbReference>
<dbReference type="RefSeq" id="WP_005751719.1">
    <property type="nucleotide sequence ID" value="NC_002663.1"/>
</dbReference>
<dbReference type="SMR" id="P57894"/>
<dbReference type="STRING" id="272843.PM0978"/>
<dbReference type="EnsemblBacteria" id="AAK03062">
    <property type="protein sequence ID" value="AAK03062"/>
    <property type="gene ID" value="PM0978"/>
</dbReference>
<dbReference type="GeneID" id="77206289"/>
<dbReference type="KEGG" id="pmu:PM0978"/>
<dbReference type="HOGENOM" id="CLU_091257_2_1_6"/>
<dbReference type="OrthoDB" id="9805499at2"/>
<dbReference type="Proteomes" id="UP000000809">
    <property type="component" value="Chromosome"/>
</dbReference>
<dbReference type="GO" id="GO:0005737">
    <property type="term" value="C:cytoplasm"/>
    <property type="evidence" value="ECO:0007669"/>
    <property type="project" value="UniProtKB-SubCell"/>
</dbReference>
<dbReference type="GO" id="GO:0048476">
    <property type="term" value="C:Holliday junction resolvase complex"/>
    <property type="evidence" value="ECO:0007669"/>
    <property type="project" value="UniProtKB-UniRule"/>
</dbReference>
<dbReference type="GO" id="GO:0008821">
    <property type="term" value="F:crossover junction DNA endonuclease activity"/>
    <property type="evidence" value="ECO:0007669"/>
    <property type="project" value="UniProtKB-UniRule"/>
</dbReference>
<dbReference type="GO" id="GO:0003677">
    <property type="term" value="F:DNA binding"/>
    <property type="evidence" value="ECO:0007669"/>
    <property type="project" value="UniProtKB-KW"/>
</dbReference>
<dbReference type="GO" id="GO:0000287">
    <property type="term" value="F:magnesium ion binding"/>
    <property type="evidence" value="ECO:0007669"/>
    <property type="project" value="UniProtKB-UniRule"/>
</dbReference>
<dbReference type="GO" id="GO:0006310">
    <property type="term" value="P:DNA recombination"/>
    <property type="evidence" value="ECO:0007669"/>
    <property type="project" value="UniProtKB-UniRule"/>
</dbReference>
<dbReference type="GO" id="GO:0006281">
    <property type="term" value="P:DNA repair"/>
    <property type="evidence" value="ECO:0007669"/>
    <property type="project" value="UniProtKB-UniRule"/>
</dbReference>
<dbReference type="CDD" id="cd16962">
    <property type="entry name" value="RuvC"/>
    <property type="match status" value="1"/>
</dbReference>
<dbReference type="FunFam" id="3.30.420.10:FF:000002">
    <property type="entry name" value="Crossover junction endodeoxyribonuclease RuvC"/>
    <property type="match status" value="1"/>
</dbReference>
<dbReference type="Gene3D" id="3.30.420.10">
    <property type="entry name" value="Ribonuclease H-like superfamily/Ribonuclease H"/>
    <property type="match status" value="1"/>
</dbReference>
<dbReference type="HAMAP" id="MF_00034">
    <property type="entry name" value="RuvC"/>
    <property type="match status" value="1"/>
</dbReference>
<dbReference type="InterPro" id="IPR012337">
    <property type="entry name" value="RNaseH-like_sf"/>
</dbReference>
<dbReference type="InterPro" id="IPR036397">
    <property type="entry name" value="RNaseH_sf"/>
</dbReference>
<dbReference type="InterPro" id="IPR020563">
    <property type="entry name" value="X-over_junc_endoDNase_Mg_BS"/>
</dbReference>
<dbReference type="InterPro" id="IPR002176">
    <property type="entry name" value="X-over_junc_endoDNase_RuvC"/>
</dbReference>
<dbReference type="NCBIfam" id="TIGR00228">
    <property type="entry name" value="ruvC"/>
    <property type="match status" value="1"/>
</dbReference>
<dbReference type="PANTHER" id="PTHR30194">
    <property type="entry name" value="CROSSOVER JUNCTION ENDODEOXYRIBONUCLEASE RUVC"/>
    <property type="match status" value="1"/>
</dbReference>
<dbReference type="PANTHER" id="PTHR30194:SF3">
    <property type="entry name" value="CROSSOVER JUNCTION ENDODEOXYRIBONUCLEASE RUVC"/>
    <property type="match status" value="1"/>
</dbReference>
<dbReference type="Pfam" id="PF02075">
    <property type="entry name" value="RuvC"/>
    <property type="match status" value="1"/>
</dbReference>
<dbReference type="PRINTS" id="PR00696">
    <property type="entry name" value="RSOLVASERUVC"/>
</dbReference>
<dbReference type="SUPFAM" id="SSF53098">
    <property type="entry name" value="Ribonuclease H-like"/>
    <property type="match status" value="1"/>
</dbReference>
<dbReference type="PROSITE" id="PS01321">
    <property type="entry name" value="RUVC"/>
    <property type="match status" value="1"/>
</dbReference>
<proteinExistence type="inferred from homology"/>
<gene>
    <name evidence="1" type="primary">ruvC</name>
    <name type="ordered locus">PM0978</name>
</gene>
<reference key="1">
    <citation type="journal article" date="2001" name="Proc. Natl. Acad. Sci. U.S.A.">
        <title>Complete genomic sequence of Pasteurella multocida Pm70.</title>
        <authorList>
            <person name="May B.J."/>
            <person name="Zhang Q."/>
            <person name="Li L.L."/>
            <person name="Paustian M.L."/>
            <person name="Whittam T.S."/>
            <person name="Kapur V."/>
        </authorList>
    </citation>
    <scope>NUCLEOTIDE SEQUENCE [LARGE SCALE GENOMIC DNA]</scope>
    <source>
        <strain>Pm70</strain>
    </source>
</reference>
<comment type="function">
    <text evidence="1">The RuvA-RuvB-RuvC complex processes Holliday junction (HJ) DNA during genetic recombination and DNA repair. Endonuclease that resolves HJ intermediates. Cleaves cruciform DNA by making single-stranded nicks across the HJ at symmetrical positions within the homologous arms, yielding a 5'-phosphate and a 3'-hydroxyl group; requires a central core of homology in the junction. The consensus cleavage sequence is 5'-(A/T)TT(C/G)-3'. Cleavage occurs on the 3'-side of the TT dinucleotide at the point of strand exchange. HJ branch migration catalyzed by RuvA-RuvB allows RuvC to scan DNA until it finds its consensus sequence, where it cleaves and resolves the cruciform DNA.</text>
</comment>
<comment type="catalytic activity">
    <reaction evidence="1">
        <text>Endonucleolytic cleavage at a junction such as a reciprocal single-stranded crossover between two homologous DNA duplexes (Holliday junction).</text>
        <dbReference type="EC" id="3.1.21.10"/>
    </reaction>
</comment>
<comment type="cofactor">
    <cofactor evidence="1">
        <name>Mg(2+)</name>
        <dbReference type="ChEBI" id="CHEBI:18420"/>
    </cofactor>
    <text evidence="1">Binds 2 Mg(2+) ion per subunit.</text>
</comment>
<comment type="subunit">
    <text evidence="1">Homodimer which binds Holliday junction (HJ) DNA. The HJ becomes 2-fold symmetrical on binding to RuvC with unstacked arms; it has a different conformation from HJ DNA in complex with RuvA. In the full resolvosome a probable DNA-RuvA(4)-RuvB(12)-RuvC(2) complex forms which resolves the HJ.</text>
</comment>
<comment type="subcellular location">
    <subcellularLocation>
        <location evidence="1">Cytoplasm</location>
    </subcellularLocation>
</comment>
<comment type="similarity">
    <text evidence="1 2">Belongs to the RuvC family.</text>
</comment>